<keyword id="KW-0067">ATP-binding</keyword>
<keyword id="KW-0963">Cytoplasm</keyword>
<keyword id="KW-0418">Kinase</keyword>
<keyword id="KW-0460">Magnesium</keyword>
<keyword id="KW-0479">Metal-binding</keyword>
<keyword id="KW-0546">Nucleotide metabolism</keyword>
<keyword id="KW-0547">Nucleotide-binding</keyword>
<keyword id="KW-0597">Phosphoprotein</keyword>
<keyword id="KW-1185">Reference proteome</keyword>
<keyword id="KW-0808">Transferase</keyword>
<sequence length="152" mass="17085">MQRTLVLLKPDCVQRRLIGDVLSRFEAKGLHIVAMKLLQVTPELSKQHYAEHVEKPFYPSLEEFITSAPVVAIALEGLEVIRVVRDMLGATNGLQAAPGTLRGDYSSSRQMNLVHASDSEESAQRELDLYFNADEFCDYSLVLTPFMRADDE</sequence>
<proteinExistence type="inferred from homology"/>
<gene>
    <name evidence="1" type="primary">ndk</name>
    <name type="ordered locus">RB11832</name>
</gene>
<feature type="chain" id="PRO_0000137030" description="Nucleoside diphosphate kinase">
    <location>
        <begin position="1"/>
        <end position="152"/>
    </location>
</feature>
<feature type="active site" description="Pros-phosphohistidine intermediate" evidence="1">
    <location>
        <position position="115"/>
    </location>
</feature>
<feature type="binding site" evidence="1">
    <location>
        <position position="9"/>
    </location>
    <ligand>
        <name>ATP</name>
        <dbReference type="ChEBI" id="CHEBI:30616"/>
    </ligand>
</feature>
<feature type="binding site" evidence="1">
    <location>
        <position position="57"/>
    </location>
    <ligand>
        <name>ATP</name>
        <dbReference type="ChEBI" id="CHEBI:30616"/>
    </ligand>
</feature>
<feature type="binding site" evidence="1">
    <location>
        <position position="85"/>
    </location>
    <ligand>
        <name>ATP</name>
        <dbReference type="ChEBI" id="CHEBI:30616"/>
    </ligand>
</feature>
<feature type="binding site" evidence="1">
    <location>
        <position position="91"/>
    </location>
    <ligand>
        <name>ATP</name>
        <dbReference type="ChEBI" id="CHEBI:30616"/>
    </ligand>
</feature>
<feature type="binding site" evidence="1">
    <location>
        <position position="102"/>
    </location>
    <ligand>
        <name>ATP</name>
        <dbReference type="ChEBI" id="CHEBI:30616"/>
    </ligand>
</feature>
<feature type="binding site" evidence="1">
    <location>
        <position position="112"/>
    </location>
    <ligand>
        <name>ATP</name>
        <dbReference type="ChEBI" id="CHEBI:30616"/>
    </ligand>
</feature>
<dbReference type="EC" id="2.7.4.6" evidence="1"/>
<dbReference type="EMBL" id="BX294154">
    <property type="protein sequence ID" value="CAD77251.1"/>
    <property type="molecule type" value="Genomic_DNA"/>
</dbReference>
<dbReference type="RefSeq" id="NP_870176.1">
    <property type="nucleotide sequence ID" value="NC_005027.1"/>
</dbReference>
<dbReference type="RefSeq" id="WP_011123449.1">
    <property type="nucleotide sequence ID" value="NC_005027.1"/>
</dbReference>
<dbReference type="SMR" id="Q7UJK7"/>
<dbReference type="FunCoup" id="Q7UJK7">
    <property type="interactions" value="490"/>
</dbReference>
<dbReference type="STRING" id="243090.RB11832"/>
<dbReference type="EnsemblBacteria" id="CAD77251">
    <property type="protein sequence ID" value="CAD77251"/>
    <property type="gene ID" value="RB11832"/>
</dbReference>
<dbReference type="KEGG" id="rba:RB11832"/>
<dbReference type="PATRIC" id="fig|243090.15.peg.5708"/>
<dbReference type="eggNOG" id="COG0105">
    <property type="taxonomic scope" value="Bacteria"/>
</dbReference>
<dbReference type="HOGENOM" id="CLU_060216_6_3_0"/>
<dbReference type="InParanoid" id="Q7UJK7"/>
<dbReference type="OrthoDB" id="9801161at2"/>
<dbReference type="Proteomes" id="UP000001025">
    <property type="component" value="Chromosome"/>
</dbReference>
<dbReference type="GO" id="GO:0005737">
    <property type="term" value="C:cytoplasm"/>
    <property type="evidence" value="ECO:0007669"/>
    <property type="project" value="UniProtKB-SubCell"/>
</dbReference>
<dbReference type="GO" id="GO:0005524">
    <property type="term" value="F:ATP binding"/>
    <property type="evidence" value="ECO:0007669"/>
    <property type="project" value="UniProtKB-UniRule"/>
</dbReference>
<dbReference type="GO" id="GO:0046872">
    <property type="term" value="F:metal ion binding"/>
    <property type="evidence" value="ECO:0007669"/>
    <property type="project" value="UniProtKB-KW"/>
</dbReference>
<dbReference type="GO" id="GO:0004550">
    <property type="term" value="F:nucleoside diphosphate kinase activity"/>
    <property type="evidence" value="ECO:0007669"/>
    <property type="project" value="UniProtKB-UniRule"/>
</dbReference>
<dbReference type="GO" id="GO:0006241">
    <property type="term" value="P:CTP biosynthetic process"/>
    <property type="evidence" value="ECO:0007669"/>
    <property type="project" value="UniProtKB-UniRule"/>
</dbReference>
<dbReference type="GO" id="GO:0006183">
    <property type="term" value="P:GTP biosynthetic process"/>
    <property type="evidence" value="ECO:0007669"/>
    <property type="project" value="UniProtKB-UniRule"/>
</dbReference>
<dbReference type="GO" id="GO:0006163">
    <property type="term" value="P:purine nucleotide metabolic process"/>
    <property type="evidence" value="ECO:0000318"/>
    <property type="project" value="GO_Central"/>
</dbReference>
<dbReference type="GO" id="GO:0006220">
    <property type="term" value="P:pyrimidine nucleotide metabolic process"/>
    <property type="evidence" value="ECO:0000318"/>
    <property type="project" value="GO_Central"/>
</dbReference>
<dbReference type="GO" id="GO:0006228">
    <property type="term" value="P:UTP biosynthetic process"/>
    <property type="evidence" value="ECO:0007669"/>
    <property type="project" value="UniProtKB-UniRule"/>
</dbReference>
<dbReference type="CDD" id="cd04413">
    <property type="entry name" value="NDPk_I"/>
    <property type="match status" value="1"/>
</dbReference>
<dbReference type="FunFam" id="3.30.70.141:FF:000003">
    <property type="entry name" value="Nucleoside diphosphate kinase"/>
    <property type="match status" value="1"/>
</dbReference>
<dbReference type="Gene3D" id="3.30.70.141">
    <property type="entry name" value="Nucleoside diphosphate kinase-like domain"/>
    <property type="match status" value="1"/>
</dbReference>
<dbReference type="HAMAP" id="MF_00451">
    <property type="entry name" value="NDP_kinase"/>
    <property type="match status" value="1"/>
</dbReference>
<dbReference type="InterPro" id="IPR034907">
    <property type="entry name" value="NDK-like_dom"/>
</dbReference>
<dbReference type="InterPro" id="IPR036850">
    <property type="entry name" value="NDK-like_dom_sf"/>
</dbReference>
<dbReference type="InterPro" id="IPR001564">
    <property type="entry name" value="Nucleoside_diP_kinase"/>
</dbReference>
<dbReference type="InterPro" id="IPR023005">
    <property type="entry name" value="Nucleoside_diP_kinase_AS"/>
</dbReference>
<dbReference type="NCBIfam" id="NF001908">
    <property type="entry name" value="PRK00668.1"/>
    <property type="match status" value="1"/>
</dbReference>
<dbReference type="PANTHER" id="PTHR11349">
    <property type="entry name" value="NUCLEOSIDE DIPHOSPHATE KINASE"/>
    <property type="match status" value="1"/>
</dbReference>
<dbReference type="Pfam" id="PF00334">
    <property type="entry name" value="NDK"/>
    <property type="match status" value="1"/>
</dbReference>
<dbReference type="PRINTS" id="PR01243">
    <property type="entry name" value="NUCDPKINASE"/>
</dbReference>
<dbReference type="SMART" id="SM00562">
    <property type="entry name" value="NDK"/>
    <property type="match status" value="1"/>
</dbReference>
<dbReference type="SUPFAM" id="SSF54919">
    <property type="entry name" value="Nucleoside diphosphate kinase, NDK"/>
    <property type="match status" value="1"/>
</dbReference>
<dbReference type="PROSITE" id="PS00469">
    <property type="entry name" value="NDPK"/>
    <property type="match status" value="1"/>
</dbReference>
<dbReference type="PROSITE" id="PS51374">
    <property type="entry name" value="NDPK_LIKE"/>
    <property type="match status" value="1"/>
</dbReference>
<evidence type="ECO:0000255" key="1">
    <source>
        <dbReference type="HAMAP-Rule" id="MF_00451"/>
    </source>
</evidence>
<comment type="function">
    <text evidence="1">Major role in the synthesis of nucleoside triphosphates other than ATP. The ATP gamma phosphate is transferred to the NDP beta phosphate via a ping-pong mechanism, using a phosphorylated active-site intermediate.</text>
</comment>
<comment type="catalytic activity">
    <reaction evidence="1">
        <text>a 2'-deoxyribonucleoside 5'-diphosphate + ATP = a 2'-deoxyribonucleoside 5'-triphosphate + ADP</text>
        <dbReference type="Rhea" id="RHEA:44640"/>
        <dbReference type="ChEBI" id="CHEBI:30616"/>
        <dbReference type="ChEBI" id="CHEBI:61560"/>
        <dbReference type="ChEBI" id="CHEBI:73316"/>
        <dbReference type="ChEBI" id="CHEBI:456216"/>
        <dbReference type="EC" id="2.7.4.6"/>
    </reaction>
</comment>
<comment type="catalytic activity">
    <reaction evidence="1">
        <text>a ribonucleoside 5'-diphosphate + ATP = a ribonucleoside 5'-triphosphate + ADP</text>
        <dbReference type="Rhea" id="RHEA:18113"/>
        <dbReference type="ChEBI" id="CHEBI:30616"/>
        <dbReference type="ChEBI" id="CHEBI:57930"/>
        <dbReference type="ChEBI" id="CHEBI:61557"/>
        <dbReference type="ChEBI" id="CHEBI:456216"/>
        <dbReference type="EC" id="2.7.4.6"/>
    </reaction>
</comment>
<comment type="cofactor">
    <cofactor evidence="1">
        <name>Mg(2+)</name>
        <dbReference type="ChEBI" id="CHEBI:18420"/>
    </cofactor>
</comment>
<comment type="subunit">
    <text evidence="1">Homotetramer.</text>
</comment>
<comment type="subcellular location">
    <subcellularLocation>
        <location evidence="1">Cytoplasm</location>
    </subcellularLocation>
</comment>
<comment type="similarity">
    <text evidence="1">Belongs to the NDK family.</text>
</comment>
<protein>
    <recommendedName>
        <fullName evidence="1">Nucleoside diphosphate kinase</fullName>
        <shortName evidence="1">NDK</shortName>
        <shortName evidence="1">NDP kinase</shortName>
        <ecNumber evidence="1">2.7.4.6</ecNumber>
    </recommendedName>
    <alternativeName>
        <fullName evidence="1">Nucleoside-2-P kinase</fullName>
    </alternativeName>
</protein>
<name>NDK_RHOBA</name>
<reference key="1">
    <citation type="journal article" date="2003" name="Proc. Natl. Acad. Sci. U.S.A.">
        <title>Complete genome sequence of the marine planctomycete Pirellula sp. strain 1.</title>
        <authorList>
            <person name="Gloeckner F.O."/>
            <person name="Kube M."/>
            <person name="Bauer M."/>
            <person name="Teeling H."/>
            <person name="Lombardot T."/>
            <person name="Ludwig W."/>
            <person name="Gade D."/>
            <person name="Beck A."/>
            <person name="Borzym K."/>
            <person name="Heitmann K."/>
            <person name="Rabus R."/>
            <person name="Schlesner H."/>
            <person name="Amann R."/>
            <person name="Reinhardt R."/>
        </authorList>
    </citation>
    <scope>NUCLEOTIDE SEQUENCE [LARGE SCALE GENOMIC DNA]</scope>
    <source>
        <strain>DSM 10527 / NCIMB 13988 / SH1</strain>
    </source>
</reference>
<accession>Q7UJK7</accession>
<organism>
    <name type="scientific">Rhodopirellula baltica (strain DSM 10527 / NCIMB 13988 / SH1)</name>
    <dbReference type="NCBI Taxonomy" id="243090"/>
    <lineage>
        <taxon>Bacteria</taxon>
        <taxon>Pseudomonadati</taxon>
        <taxon>Planctomycetota</taxon>
        <taxon>Planctomycetia</taxon>
        <taxon>Pirellulales</taxon>
        <taxon>Pirellulaceae</taxon>
        <taxon>Rhodopirellula</taxon>
    </lineage>
</organism>